<protein>
    <recommendedName>
        <fullName evidence="1">4-diphosphocytidyl-2-C-methyl-D-erythritol kinase</fullName>
        <shortName evidence="1">CMK</shortName>
        <ecNumber evidence="1">2.7.1.148</ecNumber>
    </recommendedName>
    <alternativeName>
        <fullName evidence="1">4-(cytidine-5'-diphospho)-2-C-methyl-D-erythritol kinase</fullName>
    </alternativeName>
</protein>
<comment type="function">
    <text evidence="1">Catalyzes the phosphorylation of the position 2 hydroxy group of 4-diphosphocytidyl-2C-methyl-D-erythritol.</text>
</comment>
<comment type="catalytic activity">
    <reaction evidence="1">
        <text>4-CDP-2-C-methyl-D-erythritol + ATP = 4-CDP-2-C-methyl-D-erythritol 2-phosphate + ADP + H(+)</text>
        <dbReference type="Rhea" id="RHEA:18437"/>
        <dbReference type="ChEBI" id="CHEBI:15378"/>
        <dbReference type="ChEBI" id="CHEBI:30616"/>
        <dbReference type="ChEBI" id="CHEBI:57823"/>
        <dbReference type="ChEBI" id="CHEBI:57919"/>
        <dbReference type="ChEBI" id="CHEBI:456216"/>
        <dbReference type="EC" id="2.7.1.148"/>
    </reaction>
</comment>
<comment type="pathway">
    <text evidence="1">Isoprenoid biosynthesis; isopentenyl diphosphate biosynthesis via DXP pathway; isopentenyl diphosphate from 1-deoxy-D-xylulose 5-phosphate: step 3/6.</text>
</comment>
<comment type="similarity">
    <text evidence="1">Belongs to the GHMP kinase family. IspE subfamily.</text>
</comment>
<gene>
    <name evidence="1" type="primary">ispE</name>
    <name type="ordered locus">NATL1_09481</name>
</gene>
<keyword id="KW-0067">ATP-binding</keyword>
<keyword id="KW-0414">Isoprene biosynthesis</keyword>
<keyword id="KW-0418">Kinase</keyword>
<keyword id="KW-0547">Nucleotide-binding</keyword>
<keyword id="KW-0808">Transferase</keyword>
<name>ISPE_PROM1</name>
<reference key="1">
    <citation type="journal article" date="2007" name="PLoS Genet.">
        <title>Patterns and implications of gene gain and loss in the evolution of Prochlorococcus.</title>
        <authorList>
            <person name="Kettler G.C."/>
            <person name="Martiny A.C."/>
            <person name="Huang K."/>
            <person name="Zucker J."/>
            <person name="Coleman M.L."/>
            <person name="Rodrigue S."/>
            <person name="Chen F."/>
            <person name="Lapidus A."/>
            <person name="Ferriera S."/>
            <person name="Johnson J."/>
            <person name="Steglich C."/>
            <person name="Church G.M."/>
            <person name="Richardson P."/>
            <person name="Chisholm S.W."/>
        </authorList>
    </citation>
    <scope>NUCLEOTIDE SEQUENCE [LARGE SCALE GENOMIC DNA]</scope>
    <source>
        <strain>NATL1A</strain>
    </source>
</reference>
<organism>
    <name type="scientific">Prochlorococcus marinus (strain NATL1A)</name>
    <dbReference type="NCBI Taxonomy" id="167555"/>
    <lineage>
        <taxon>Bacteria</taxon>
        <taxon>Bacillati</taxon>
        <taxon>Cyanobacteriota</taxon>
        <taxon>Cyanophyceae</taxon>
        <taxon>Synechococcales</taxon>
        <taxon>Prochlorococcaceae</taxon>
        <taxon>Prochlorococcus</taxon>
    </lineage>
</organism>
<proteinExistence type="inferred from homology"/>
<feature type="chain" id="PRO_1000007870" description="4-diphosphocytidyl-2-C-methyl-D-erythritol kinase">
    <location>
        <begin position="1"/>
        <end position="319"/>
    </location>
</feature>
<feature type="active site" evidence="1">
    <location>
        <position position="18"/>
    </location>
</feature>
<feature type="active site" evidence="1">
    <location>
        <position position="145"/>
    </location>
</feature>
<feature type="binding site" evidence="1">
    <location>
        <begin position="103"/>
        <end position="113"/>
    </location>
    <ligand>
        <name>ATP</name>
        <dbReference type="ChEBI" id="CHEBI:30616"/>
    </ligand>
</feature>
<evidence type="ECO:0000255" key="1">
    <source>
        <dbReference type="HAMAP-Rule" id="MF_00061"/>
    </source>
</evidence>
<dbReference type="EC" id="2.7.1.148" evidence="1"/>
<dbReference type="EMBL" id="CP000553">
    <property type="protein sequence ID" value="ABM75506.1"/>
    <property type="molecule type" value="Genomic_DNA"/>
</dbReference>
<dbReference type="RefSeq" id="WP_011823640.1">
    <property type="nucleotide sequence ID" value="NC_008819.1"/>
</dbReference>
<dbReference type="SMR" id="A2C1Z6"/>
<dbReference type="KEGG" id="pme:NATL1_09481"/>
<dbReference type="eggNOG" id="COG1947">
    <property type="taxonomic scope" value="Bacteria"/>
</dbReference>
<dbReference type="HOGENOM" id="CLU_053057_1_1_3"/>
<dbReference type="UniPathway" id="UPA00056">
    <property type="reaction ID" value="UER00094"/>
</dbReference>
<dbReference type="Proteomes" id="UP000002592">
    <property type="component" value="Chromosome"/>
</dbReference>
<dbReference type="GO" id="GO:0050515">
    <property type="term" value="F:4-(cytidine 5'-diphospho)-2-C-methyl-D-erythritol kinase activity"/>
    <property type="evidence" value="ECO:0007669"/>
    <property type="project" value="UniProtKB-UniRule"/>
</dbReference>
<dbReference type="GO" id="GO:0005524">
    <property type="term" value="F:ATP binding"/>
    <property type="evidence" value="ECO:0007669"/>
    <property type="project" value="UniProtKB-UniRule"/>
</dbReference>
<dbReference type="GO" id="GO:0019288">
    <property type="term" value="P:isopentenyl diphosphate biosynthetic process, methylerythritol 4-phosphate pathway"/>
    <property type="evidence" value="ECO:0007669"/>
    <property type="project" value="UniProtKB-UniRule"/>
</dbReference>
<dbReference type="GO" id="GO:0016114">
    <property type="term" value="P:terpenoid biosynthetic process"/>
    <property type="evidence" value="ECO:0007669"/>
    <property type="project" value="InterPro"/>
</dbReference>
<dbReference type="Gene3D" id="3.30.230.10">
    <property type="match status" value="1"/>
</dbReference>
<dbReference type="Gene3D" id="3.30.70.890">
    <property type="entry name" value="GHMP kinase, C-terminal domain"/>
    <property type="match status" value="1"/>
</dbReference>
<dbReference type="HAMAP" id="MF_00061">
    <property type="entry name" value="IspE"/>
    <property type="match status" value="1"/>
</dbReference>
<dbReference type="InterPro" id="IPR013750">
    <property type="entry name" value="GHMP_kinase_C_dom"/>
</dbReference>
<dbReference type="InterPro" id="IPR036554">
    <property type="entry name" value="GHMP_kinase_C_sf"/>
</dbReference>
<dbReference type="InterPro" id="IPR006204">
    <property type="entry name" value="GHMP_kinase_N_dom"/>
</dbReference>
<dbReference type="InterPro" id="IPR004424">
    <property type="entry name" value="IspE"/>
</dbReference>
<dbReference type="InterPro" id="IPR020568">
    <property type="entry name" value="Ribosomal_Su5_D2-typ_SF"/>
</dbReference>
<dbReference type="InterPro" id="IPR014721">
    <property type="entry name" value="Ribsml_uS5_D2-typ_fold_subgr"/>
</dbReference>
<dbReference type="NCBIfam" id="TIGR00154">
    <property type="entry name" value="ispE"/>
    <property type="match status" value="1"/>
</dbReference>
<dbReference type="NCBIfam" id="NF011202">
    <property type="entry name" value="PRK14608.1"/>
    <property type="match status" value="1"/>
</dbReference>
<dbReference type="PANTHER" id="PTHR43527">
    <property type="entry name" value="4-DIPHOSPHOCYTIDYL-2-C-METHYL-D-ERYTHRITOL KINASE, CHLOROPLASTIC"/>
    <property type="match status" value="1"/>
</dbReference>
<dbReference type="PANTHER" id="PTHR43527:SF2">
    <property type="entry name" value="4-DIPHOSPHOCYTIDYL-2-C-METHYL-D-ERYTHRITOL KINASE, CHLOROPLASTIC"/>
    <property type="match status" value="1"/>
</dbReference>
<dbReference type="Pfam" id="PF08544">
    <property type="entry name" value="GHMP_kinases_C"/>
    <property type="match status" value="1"/>
</dbReference>
<dbReference type="Pfam" id="PF00288">
    <property type="entry name" value="GHMP_kinases_N"/>
    <property type="match status" value="1"/>
</dbReference>
<dbReference type="PIRSF" id="PIRSF010376">
    <property type="entry name" value="IspE"/>
    <property type="match status" value="1"/>
</dbReference>
<dbReference type="SUPFAM" id="SSF55060">
    <property type="entry name" value="GHMP Kinase, C-terminal domain"/>
    <property type="match status" value="1"/>
</dbReference>
<dbReference type="SUPFAM" id="SSF54211">
    <property type="entry name" value="Ribosomal protein S5 domain 2-like"/>
    <property type="match status" value="1"/>
</dbReference>
<accession>A2C1Z6</accession>
<sequence length="319" mass="35717">MEPSKANEDFLIAKAHAKINLHLEVLGIRSDGFHELAMVMQSINLSDQLKMIKRVDNTINLKSNNKEISNGDDNLIIKASKLLRNKVENQELGVDIELEKNIPIGAGLAGGSTDAAATLLGLNKLWKLNLKTDELENLSKEIGSDIPFCISGGRQICFGRGEILEKLKFDQIQLGLILVKDPSIQVSTPVAYKKYKDQFGESYLEDDRDFEIKRNSIRSIDWSDQSLFDNRKEIQNDLQKSVRPITPEVEKSLDLLSSLPDSRLVSMSGSGPSCFALFQNYDQANKVLKEHVNEFERAGLSAWACSMMSNGVELRNEFI</sequence>